<sequence length="199" mass="23168">MKTLFFATSNINKINEVKQILDIPKIKIEIPQNFDIKETGKTFKENSLLKAKALFKILNNKQPVFSEDSGLCIEALNMEPGIYSKRYDQYKLGKKLDNNEKNHLIIDLMREKNNRTAYFICVISYIDVDGTINNFEGMLKGTIALNIDYYQKNGFGYDPIFLTTNNKRLSELNLEEKNKISHRGIAFDKFKKFLMQFLD</sequence>
<accession>B5RL72</accession>
<feature type="chain" id="PRO_1000145482" description="dITP/XTP pyrophosphatase">
    <location>
        <begin position="1"/>
        <end position="199"/>
    </location>
</feature>
<feature type="active site" description="Proton acceptor" evidence="1">
    <location>
        <position position="68"/>
    </location>
</feature>
<feature type="binding site" evidence="1">
    <location>
        <begin position="8"/>
        <end position="13"/>
    </location>
    <ligand>
        <name>substrate</name>
    </ligand>
</feature>
<feature type="binding site" evidence="1">
    <location>
        <position position="68"/>
    </location>
    <ligand>
        <name>Mg(2+)</name>
        <dbReference type="ChEBI" id="CHEBI:18420"/>
    </ligand>
</feature>
<feature type="binding site" evidence="1">
    <location>
        <position position="69"/>
    </location>
    <ligand>
        <name>substrate</name>
    </ligand>
</feature>
<feature type="binding site" evidence="1">
    <location>
        <begin position="155"/>
        <end position="158"/>
    </location>
    <ligand>
        <name>substrate</name>
    </ligand>
</feature>
<feature type="binding site" evidence="1">
    <location>
        <position position="177"/>
    </location>
    <ligand>
        <name>substrate</name>
    </ligand>
</feature>
<feature type="binding site" evidence="1">
    <location>
        <begin position="182"/>
        <end position="183"/>
    </location>
    <ligand>
        <name>substrate</name>
    </ligand>
</feature>
<gene>
    <name type="ordered locus">BDU_248</name>
</gene>
<evidence type="ECO:0000255" key="1">
    <source>
        <dbReference type="HAMAP-Rule" id="MF_01405"/>
    </source>
</evidence>
<protein>
    <recommendedName>
        <fullName evidence="1">dITP/XTP pyrophosphatase</fullName>
        <ecNumber evidence="1">3.6.1.66</ecNumber>
    </recommendedName>
    <alternativeName>
        <fullName evidence="1">Non-canonical purine NTP pyrophosphatase</fullName>
    </alternativeName>
    <alternativeName>
        <fullName evidence="1">Non-standard purine NTP pyrophosphatase</fullName>
    </alternativeName>
    <alternativeName>
        <fullName evidence="1">Nucleoside-triphosphate diphosphatase</fullName>
    </alternativeName>
    <alternativeName>
        <fullName evidence="1">Nucleoside-triphosphate pyrophosphatase</fullName>
        <shortName evidence="1">NTPase</shortName>
    </alternativeName>
</protein>
<comment type="function">
    <text evidence="1">Pyrophosphatase that catalyzes the hydrolysis of nucleoside triphosphates to their monophosphate derivatives, with a high preference for the non-canonical purine nucleotides XTP (xanthosine triphosphate), dITP (deoxyinosine triphosphate) and ITP. Seems to function as a house-cleaning enzyme that removes non-canonical purine nucleotides from the nucleotide pool, thus preventing their incorporation into DNA/RNA and avoiding chromosomal lesions.</text>
</comment>
<comment type="catalytic activity">
    <reaction evidence="1">
        <text>XTP + H2O = XMP + diphosphate + H(+)</text>
        <dbReference type="Rhea" id="RHEA:28610"/>
        <dbReference type="ChEBI" id="CHEBI:15377"/>
        <dbReference type="ChEBI" id="CHEBI:15378"/>
        <dbReference type="ChEBI" id="CHEBI:33019"/>
        <dbReference type="ChEBI" id="CHEBI:57464"/>
        <dbReference type="ChEBI" id="CHEBI:61314"/>
        <dbReference type="EC" id="3.6.1.66"/>
    </reaction>
</comment>
<comment type="catalytic activity">
    <reaction evidence="1">
        <text>dITP + H2O = dIMP + diphosphate + H(+)</text>
        <dbReference type="Rhea" id="RHEA:28342"/>
        <dbReference type="ChEBI" id="CHEBI:15377"/>
        <dbReference type="ChEBI" id="CHEBI:15378"/>
        <dbReference type="ChEBI" id="CHEBI:33019"/>
        <dbReference type="ChEBI" id="CHEBI:61194"/>
        <dbReference type="ChEBI" id="CHEBI:61382"/>
        <dbReference type="EC" id="3.6.1.66"/>
    </reaction>
</comment>
<comment type="catalytic activity">
    <reaction evidence="1">
        <text>ITP + H2O = IMP + diphosphate + H(+)</text>
        <dbReference type="Rhea" id="RHEA:29399"/>
        <dbReference type="ChEBI" id="CHEBI:15377"/>
        <dbReference type="ChEBI" id="CHEBI:15378"/>
        <dbReference type="ChEBI" id="CHEBI:33019"/>
        <dbReference type="ChEBI" id="CHEBI:58053"/>
        <dbReference type="ChEBI" id="CHEBI:61402"/>
        <dbReference type="EC" id="3.6.1.66"/>
    </reaction>
</comment>
<comment type="cofactor">
    <cofactor evidence="1">
        <name>Mg(2+)</name>
        <dbReference type="ChEBI" id="CHEBI:18420"/>
    </cofactor>
    <text evidence="1">Binds 1 Mg(2+) ion per subunit.</text>
</comment>
<comment type="subunit">
    <text evidence="1">Homodimer.</text>
</comment>
<comment type="similarity">
    <text evidence="1">Belongs to the HAM1 NTPase family.</text>
</comment>
<keyword id="KW-0378">Hydrolase</keyword>
<keyword id="KW-0460">Magnesium</keyword>
<keyword id="KW-0479">Metal-binding</keyword>
<keyword id="KW-0546">Nucleotide metabolism</keyword>
<keyword id="KW-0547">Nucleotide-binding</keyword>
<dbReference type="EC" id="3.6.1.66" evidence="1"/>
<dbReference type="EMBL" id="CP000976">
    <property type="protein sequence ID" value="ACH93201.1"/>
    <property type="molecule type" value="Genomic_DNA"/>
</dbReference>
<dbReference type="RefSeq" id="WP_012538013.1">
    <property type="nucleotide sequence ID" value="NC_011229.1"/>
</dbReference>
<dbReference type="SMR" id="B5RL72"/>
<dbReference type="STRING" id="412419.BDU_248"/>
<dbReference type="KEGG" id="bdu:BDU_248"/>
<dbReference type="eggNOG" id="COG0127">
    <property type="taxonomic scope" value="Bacteria"/>
</dbReference>
<dbReference type="HOGENOM" id="CLU_082080_0_2_12"/>
<dbReference type="OrthoDB" id="9807456at2"/>
<dbReference type="Proteomes" id="UP000000611">
    <property type="component" value="Chromosome"/>
</dbReference>
<dbReference type="GO" id="GO:0005829">
    <property type="term" value="C:cytosol"/>
    <property type="evidence" value="ECO:0007669"/>
    <property type="project" value="TreeGrafter"/>
</dbReference>
<dbReference type="GO" id="GO:0035870">
    <property type="term" value="F:dITP diphosphatase activity"/>
    <property type="evidence" value="ECO:0007669"/>
    <property type="project" value="RHEA"/>
</dbReference>
<dbReference type="GO" id="GO:0036220">
    <property type="term" value="F:ITP diphosphatase activity"/>
    <property type="evidence" value="ECO:0007669"/>
    <property type="project" value="UniProtKB-EC"/>
</dbReference>
<dbReference type="GO" id="GO:0046872">
    <property type="term" value="F:metal ion binding"/>
    <property type="evidence" value="ECO:0007669"/>
    <property type="project" value="UniProtKB-KW"/>
</dbReference>
<dbReference type="GO" id="GO:0000166">
    <property type="term" value="F:nucleotide binding"/>
    <property type="evidence" value="ECO:0007669"/>
    <property type="project" value="UniProtKB-KW"/>
</dbReference>
<dbReference type="GO" id="GO:0017111">
    <property type="term" value="F:ribonucleoside triphosphate phosphatase activity"/>
    <property type="evidence" value="ECO:0007669"/>
    <property type="project" value="InterPro"/>
</dbReference>
<dbReference type="GO" id="GO:0036222">
    <property type="term" value="F:XTP diphosphatase activity"/>
    <property type="evidence" value="ECO:0007669"/>
    <property type="project" value="RHEA"/>
</dbReference>
<dbReference type="GO" id="GO:0009117">
    <property type="term" value="P:nucleotide metabolic process"/>
    <property type="evidence" value="ECO:0007669"/>
    <property type="project" value="UniProtKB-KW"/>
</dbReference>
<dbReference type="GO" id="GO:0009146">
    <property type="term" value="P:purine nucleoside triphosphate catabolic process"/>
    <property type="evidence" value="ECO:0007669"/>
    <property type="project" value="UniProtKB-UniRule"/>
</dbReference>
<dbReference type="CDD" id="cd00515">
    <property type="entry name" value="HAM1"/>
    <property type="match status" value="1"/>
</dbReference>
<dbReference type="FunFam" id="3.90.950.10:FF:000001">
    <property type="entry name" value="dITP/XTP pyrophosphatase"/>
    <property type="match status" value="1"/>
</dbReference>
<dbReference type="Gene3D" id="3.90.950.10">
    <property type="match status" value="1"/>
</dbReference>
<dbReference type="HAMAP" id="MF_01405">
    <property type="entry name" value="Non_canon_purine_NTPase"/>
    <property type="match status" value="1"/>
</dbReference>
<dbReference type="InterPro" id="IPR020922">
    <property type="entry name" value="dITP/XTP_pyrophosphatase"/>
</dbReference>
<dbReference type="InterPro" id="IPR029001">
    <property type="entry name" value="ITPase-like_fam"/>
</dbReference>
<dbReference type="InterPro" id="IPR002637">
    <property type="entry name" value="RdgB/HAM1"/>
</dbReference>
<dbReference type="NCBIfam" id="NF011400">
    <property type="entry name" value="PRK14825.1"/>
    <property type="match status" value="1"/>
</dbReference>
<dbReference type="NCBIfam" id="TIGR00042">
    <property type="entry name" value="RdgB/HAM1 family non-canonical purine NTP pyrophosphatase"/>
    <property type="match status" value="1"/>
</dbReference>
<dbReference type="PANTHER" id="PTHR11067:SF9">
    <property type="entry name" value="INOSINE TRIPHOSPHATE PYROPHOSPHATASE"/>
    <property type="match status" value="1"/>
</dbReference>
<dbReference type="PANTHER" id="PTHR11067">
    <property type="entry name" value="INOSINE TRIPHOSPHATE PYROPHOSPHATASE/HAM1 PROTEIN"/>
    <property type="match status" value="1"/>
</dbReference>
<dbReference type="Pfam" id="PF01725">
    <property type="entry name" value="Ham1p_like"/>
    <property type="match status" value="1"/>
</dbReference>
<dbReference type="SUPFAM" id="SSF52972">
    <property type="entry name" value="ITPase-like"/>
    <property type="match status" value="1"/>
</dbReference>
<organism>
    <name type="scientific">Borrelia duttonii (strain Ly)</name>
    <dbReference type="NCBI Taxonomy" id="412419"/>
    <lineage>
        <taxon>Bacteria</taxon>
        <taxon>Pseudomonadati</taxon>
        <taxon>Spirochaetota</taxon>
        <taxon>Spirochaetia</taxon>
        <taxon>Spirochaetales</taxon>
        <taxon>Borreliaceae</taxon>
        <taxon>Borrelia</taxon>
    </lineage>
</organism>
<name>IXTPA_BORDL</name>
<reference key="1">
    <citation type="journal article" date="2008" name="PLoS Genet.">
        <title>The genome of Borrelia recurrentis, the agent of deadly louse-borne relapsing fever, is a degraded subset of tick-borne Borrelia duttonii.</title>
        <authorList>
            <person name="Lescot M."/>
            <person name="Audic S."/>
            <person name="Robert C."/>
            <person name="Nguyen T.T."/>
            <person name="Blanc G."/>
            <person name="Cutler S.J."/>
            <person name="Wincker P."/>
            <person name="Couloux A."/>
            <person name="Claverie J.-M."/>
            <person name="Raoult D."/>
            <person name="Drancourt M."/>
        </authorList>
    </citation>
    <scope>NUCLEOTIDE SEQUENCE [LARGE SCALE GENOMIC DNA]</scope>
    <source>
        <strain>Ly</strain>
    </source>
</reference>
<proteinExistence type="inferred from homology"/>